<proteinExistence type="evidence at protein level"/>
<feature type="chain" id="PRO_0000002784" description="Erlin-1">
    <location>
        <begin position="1"/>
        <end position="348"/>
    </location>
</feature>
<feature type="topological domain" description="Cytoplasmic" evidence="16">
    <location>
        <begin position="1"/>
        <end position="7"/>
    </location>
</feature>
<feature type="transmembrane region" description="Helical" evidence="1">
    <location>
        <begin position="8"/>
        <end position="28"/>
    </location>
</feature>
<feature type="topological domain" description="Lumenal" evidence="16">
    <location>
        <begin position="29"/>
        <end position="348"/>
    </location>
</feature>
<feature type="region of interest" description="Disordered" evidence="2">
    <location>
        <begin position="325"/>
        <end position="348"/>
    </location>
</feature>
<feature type="compositionally biased region" description="Polar residues" evidence="2">
    <location>
        <begin position="339"/>
        <end position="348"/>
    </location>
</feature>
<feature type="modified residue" description="N6-acetyllysine" evidence="19">
    <location>
        <position position="269"/>
    </location>
</feature>
<feature type="glycosylation site" description="N-linked (GlcNAc...) asparagine" evidence="5">
    <location>
        <position position="108"/>
    </location>
</feature>
<feature type="sequence variant" id="VAR_077847" description="In SPG62; dbSNP:rs876661322." evidence="10">
    <original>G</original>
    <variation>V</variation>
    <location>
        <position position="50"/>
    </location>
</feature>
<feature type="sequence conflict" description="In Ref. 2; BAD96200." evidence="16" ref="2">
    <original>K</original>
    <variation>R</variation>
    <location>
        <position position="259"/>
    </location>
</feature>
<keyword id="KW-0007">Acetylation</keyword>
<keyword id="KW-0153">Cholesterol metabolism</keyword>
<keyword id="KW-0903">Direct protein sequencing</keyword>
<keyword id="KW-0225">Disease variant</keyword>
<keyword id="KW-0256">Endoplasmic reticulum</keyword>
<keyword id="KW-0325">Glycoprotein</keyword>
<keyword id="KW-0890">Hereditary spastic paraplegia</keyword>
<keyword id="KW-0443">Lipid metabolism</keyword>
<keyword id="KW-0446">Lipid-binding</keyword>
<keyword id="KW-0472">Membrane</keyword>
<keyword id="KW-0523">Neurodegeneration</keyword>
<keyword id="KW-1267">Proteomics identification</keyword>
<keyword id="KW-1185">Reference proteome</keyword>
<keyword id="KW-0735">Signal-anchor</keyword>
<keyword id="KW-0753">Steroid metabolism</keyword>
<keyword id="KW-1207">Sterol metabolism</keyword>
<keyword id="KW-0812">Transmembrane</keyword>
<keyword id="KW-1133">Transmembrane helix</keyword>
<dbReference type="EMBL" id="AF064093">
    <property type="protein sequence ID" value="AAC26658.1"/>
    <property type="status" value="ALT_INIT"/>
    <property type="molecule type" value="mRNA"/>
</dbReference>
<dbReference type="EMBL" id="AK222480">
    <property type="protein sequence ID" value="BAD96200.1"/>
    <property type="status" value="ALT_INIT"/>
    <property type="molecule type" value="mRNA"/>
</dbReference>
<dbReference type="EMBL" id="AL138921">
    <property type="status" value="NOT_ANNOTATED_CDS"/>
    <property type="molecule type" value="Genomic_DNA"/>
</dbReference>
<dbReference type="EMBL" id="CH471066">
    <property type="protein sequence ID" value="EAW49846.1"/>
    <property type="molecule type" value="Genomic_DNA"/>
</dbReference>
<dbReference type="EMBL" id="CH471066">
    <property type="protein sequence ID" value="EAW49847.1"/>
    <property type="molecule type" value="Genomic_DNA"/>
</dbReference>
<dbReference type="EMBL" id="BC031791">
    <property type="protein sequence ID" value="AAH31791.1"/>
    <property type="status" value="ALT_INIT"/>
    <property type="molecule type" value="mRNA"/>
</dbReference>
<dbReference type="CCDS" id="CCDS7487.2"/>
<dbReference type="RefSeq" id="NP_001094096.1">
    <property type="nucleotide sequence ID" value="NM_001100626.2"/>
</dbReference>
<dbReference type="RefSeq" id="NP_001334786.1">
    <property type="nucleotide sequence ID" value="NM_001347857.2"/>
</dbReference>
<dbReference type="RefSeq" id="NP_001334788.1">
    <property type="nucleotide sequence ID" value="NM_001347859.2"/>
</dbReference>
<dbReference type="RefSeq" id="NP_001334789.1">
    <property type="nucleotide sequence ID" value="NM_001347860.2"/>
</dbReference>
<dbReference type="RefSeq" id="NP_001334790.1">
    <property type="nucleotide sequence ID" value="NM_001347861.2"/>
</dbReference>
<dbReference type="RefSeq" id="NP_006450.2">
    <property type="nucleotide sequence ID" value="NM_006459.4"/>
</dbReference>
<dbReference type="SMR" id="O75477"/>
<dbReference type="BioGRID" id="115859">
    <property type="interactions" value="179"/>
</dbReference>
<dbReference type="ComplexPortal" id="CPX-7121">
    <property type="entry name" value="ERLIN1-ERLIN2 complex"/>
</dbReference>
<dbReference type="CORUM" id="O75477"/>
<dbReference type="FunCoup" id="O75477">
    <property type="interactions" value="1234"/>
</dbReference>
<dbReference type="IntAct" id="O75477">
    <property type="interactions" value="101"/>
</dbReference>
<dbReference type="MINT" id="O75477"/>
<dbReference type="STRING" id="9606.ENSP00000410964"/>
<dbReference type="TCDB" id="1.P.1.1.1">
    <property type="family name" value="the polyoma virus sv40 er penetration channel (vpec) family"/>
</dbReference>
<dbReference type="TCDB" id="8.A.195.1.1">
    <property type="family name" value="the erlin1/2 complex (erlin) family"/>
</dbReference>
<dbReference type="GlyConnect" id="1221">
    <property type="glycosylation" value="10 N-Linked glycans (1 site)"/>
</dbReference>
<dbReference type="GlyCosmos" id="O75477">
    <property type="glycosylation" value="1 site, 10 glycans"/>
</dbReference>
<dbReference type="GlyGen" id="O75477">
    <property type="glycosylation" value="2 sites, 10 N-linked glycans (1 site), 1 O-linked glycan (1 site)"/>
</dbReference>
<dbReference type="iPTMnet" id="O75477"/>
<dbReference type="PhosphoSitePlus" id="O75477"/>
<dbReference type="SwissPalm" id="O75477"/>
<dbReference type="BioMuta" id="ERLIN1"/>
<dbReference type="jPOST" id="O75477"/>
<dbReference type="MassIVE" id="O75477"/>
<dbReference type="PaxDb" id="9606-ENSP00000410964"/>
<dbReference type="PeptideAtlas" id="O75477"/>
<dbReference type="PRIDE" id="O75477"/>
<dbReference type="ProteomicsDB" id="50039"/>
<dbReference type="Pumba" id="O75477"/>
<dbReference type="Antibodypedia" id="2279">
    <property type="antibodies" value="209 antibodies from 30 providers"/>
</dbReference>
<dbReference type="DNASU" id="10613"/>
<dbReference type="Ensembl" id="ENST00000407654.7">
    <property type="protein sequence ID" value="ENSP00000384900.3"/>
    <property type="gene ID" value="ENSG00000107566.14"/>
</dbReference>
<dbReference type="Ensembl" id="ENST00000421367.7">
    <property type="protein sequence ID" value="ENSP00000410964.2"/>
    <property type="gene ID" value="ENSG00000107566.14"/>
</dbReference>
<dbReference type="GeneID" id="10613"/>
<dbReference type="KEGG" id="hsa:10613"/>
<dbReference type="MANE-Select" id="ENST00000421367.7">
    <property type="protein sequence ID" value="ENSP00000410964.2"/>
    <property type="RefSeq nucleotide sequence ID" value="NM_006459.4"/>
    <property type="RefSeq protein sequence ID" value="NP_006450.2"/>
</dbReference>
<dbReference type="UCSC" id="uc001kqn.5">
    <property type="organism name" value="human"/>
</dbReference>
<dbReference type="AGR" id="HGNC:16947"/>
<dbReference type="CTD" id="10613"/>
<dbReference type="DisGeNET" id="10613"/>
<dbReference type="GeneCards" id="ERLIN1"/>
<dbReference type="HGNC" id="HGNC:16947">
    <property type="gene designation" value="ERLIN1"/>
</dbReference>
<dbReference type="HPA" id="ENSG00000107566">
    <property type="expression patterns" value="Tissue enhanced (liver)"/>
</dbReference>
<dbReference type="MalaCards" id="ERLIN1"/>
<dbReference type="MIM" id="611604">
    <property type="type" value="gene"/>
</dbReference>
<dbReference type="MIM" id="615681">
    <property type="type" value="phenotype"/>
</dbReference>
<dbReference type="neXtProt" id="NX_O75477"/>
<dbReference type="OpenTargets" id="ENSG00000107566"/>
<dbReference type="Orphanet" id="401785">
    <property type="disease" value="Autosomal recessive spastic paraplegia type 62"/>
</dbReference>
<dbReference type="PharmGKB" id="PA162385299"/>
<dbReference type="VEuPathDB" id="HostDB:ENSG00000107566"/>
<dbReference type="eggNOG" id="KOG2962">
    <property type="taxonomic scope" value="Eukaryota"/>
</dbReference>
<dbReference type="GeneTree" id="ENSGT00390000014666"/>
<dbReference type="InParanoid" id="O75477"/>
<dbReference type="OMA" id="HIMIPIL"/>
<dbReference type="OrthoDB" id="77368at2759"/>
<dbReference type="PAN-GO" id="O75477">
    <property type="GO annotations" value="3 GO annotations based on evolutionary models"/>
</dbReference>
<dbReference type="PhylomeDB" id="O75477"/>
<dbReference type="TreeFam" id="TF313059"/>
<dbReference type="PathwayCommons" id="O75477"/>
<dbReference type="Reactome" id="R-HSA-382556">
    <property type="pathway name" value="ABC-family proteins mediated transport"/>
</dbReference>
<dbReference type="Reactome" id="R-HSA-5678895">
    <property type="pathway name" value="Defective CFTR causes cystic fibrosis"/>
</dbReference>
<dbReference type="SignaLink" id="O75477"/>
<dbReference type="SIGNOR" id="O75477"/>
<dbReference type="BioGRID-ORCS" id="10613">
    <property type="hits" value="21 hits in 1154 CRISPR screens"/>
</dbReference>
<dbReference type="CD-CODE" id="FB4E32DD">
    <property type="entry name" value="Presynaptic clusters and postsynaptic densities"/>
</dbReference>
<dbReference type="ChiTaRS" id="ERLIN1">
    <property type="organism name" value="human"/>
</dbReference>
<dbReference type="GeneWiki" id="ERLIN1"/>
<dbReference type="GenomeRNAi" id="10613"/>
<dbReference type="Pharos" id="O75477">
    <property type="development level" value="Tbio"/>
</dbReference>
<dbReference type="PRO" id="PR:O75477"/>
<dbReference type="Proteomes" id="UP000005640">
    <property type="component" value="Chromosome 10"/>
</dbReference>
<dbReference type="RNAct" id="O75477">
    <property type="molecule type" value="protein"/>
</dbReference>
<dbReference type="Bgee" id="ENSG00000107566">
    <property type="expression patterns" value="Expressed in secondary oocyte and 214 other cell types or tissues"/>
</dbReference>
<dbReference type="ExpressionAtlas" id="O75477">
    <property type="expression patterns" value="baseline and differential"/>
</dbReference>
<dbReference type="GO" id="GO:0005783">
    <property type="term" value="C:endoplasmic reticulum"/>
    <property type="evidence" value="ECO:0000314"/>
    <property type="project" value="HPA"/>
</dbReference>
<dbReference type="GO" id="GO:0005789">
    <property type="term" value="C:endoplasmic reticulum membrane"/>
    <property type="evidence" value="ECO:0000314"/>
    <property type="project" value="UniProtKB"/>
</dbReference>
<dbReference type="GO" id="GO:0045121">
    <property type="term" value="C:membrane raft"/>
    <property type="evidence" value="ECO:0000303"/>
    <property type="project" value="ComplexPortal"/>
</dbReference>
<dbReference type="GO" id="GO:0032991">
    <property type="term" value="C:protein-containing complex"/>
    <property type="evidence" value="ECO:0000314"/>
    <property type="project" value="MGI"/>
</dbReference>
<dbReference type="GO" id="GO:0015485">
    <property type="term" value="F:cholesterol binding"/>
    <property type="evidence" value="ECO:0000314"/>
    <property type="project" value="UniProtKB"/>
</dbReference>
<dbReference type="GO" id="GO:0031625">
    <property type="term" value="F:ubiquitin protein ligase binding"/>
    <property type="evidence" value="ECO:0007669"/>
    <property type="project" value="InterPro"/>
</dbReference>
<dbReference type="GO" id="GO:0008203">
    <property type="term" value="P:cholesterol metabolic process"/>
    <property type="evidence" value="ECO:0007669"/>
    <property type="project" value="UniProtKB-KW"/>
</dbReference>
<dbReference type="GO" id="GO:0036503">
    <property type="term" value="P:ERAD pathway"/>
    <property type="evidence" value="ECO:0000314"/>
    <property type="project" value="UniProtKB"/>
</dbReference>
<dbReference type="GO" id="GO:0045541">
    <property type="term" value="P:negative regulation of cholesterol biosynthetic process"/>
    <property type="evidence" value="ECO:0000315"/>
    <property type="project" value="UniProtKB"/>
</dbReference>
<dbReference type="GO" id="GO:0045717">
    <property type="term" value="P:negative regulation of fatty acid biosynthetic process"/>
    <property type="evidence" value="ECO:0000315"/>
    <property type="project" value="UniProtKB"/>
</dbReference>
<dbReference type="GO" id="GO:0045540">
    <property type="term" value="P:regulation of cholesterol biosynthetic process"/>
    <property type="evidence" value="ECO:0000314"/>
    <property type="project" value="ComplexPortal"/>
</dbReference>
<dbReference type="GO" id="GO:0032933">
    <property type="term" value="P:SREBP signaling pathway"/>
    <property type="evidence" value="ECO:0000315"/>
    <property type="project" value="UniProtKB"/>
</dbReference>
<dbReference type="CDD" id="cd03406">
    <property type="entry name" value="SPFH_like_u3"/>
    <property type="match status" value="1"/>
</dbReference>
<dbReference type="FunFam" id="3.30.479.30:FF:000009">
    <property type="entry name" value="Erlin-2 isoform 1"/>
    <property type="match status" value="1"/>
</dbReference>
<dbReference type="Gene3D" id="3.30.479.30">
    <property type="entry name" value="Band 7 domain"/>
    <property type="match status" value="1"/>
</dbReference>
<dbReference type="InterPro" id="IPR001107">
    <property type="entry name" value="Band_7"/>
</dbReference>
<dbReference type="InterPro" id="IPR036013">
    <property type="entry name" value="Band_7/SPFH_dom_sf"/>
</dbReference>
<dbReference type="InterPro" id="IPR033294">
    <property type="entry name" value="Erlin1/2"/>
</dbReference>
<dbReference type="PANTHER" id="PTHR15351">
    <property type="entry name" value="ERLIN (ER LIPID RAFT ASSOCIATED PROTEIN) HOMOLOG"/>
    <property type="match status" value="1"/>
</dbReference>
<dbReference type="PANTHER" id="PTHR15351:SF2">
    <property type="entry name" value="ERLIN-1"/>
    <property type="match status" value="1"/>
</dbReference>
<dbReference type="Pfam" id="PF01145">
    <property type="entry name" value="Band_7"/>
    <property type="match status" value="1"/>
</dbReference>
<dbReference type="SMART" id="SM00244">
    <property type="entry name" value="PHB"/>
    <property type="match status" value="1"/>
</dbReference>
<dbReference type="SUPFAM" id="SSF117892">
    <property type="entry name" value="Band 7/SPFH domain"/>
    <property type="match status" value="1"/>
</dbReference>
<gene>
    <name evidence="18" type="primary">ERLIN1</name>
    <name evidence="18" type="synonym">C10orf69</name>
    <name evidence="13" type="synonym">KE04</name>
    <name type="synonym">KEO4</name>
    <name evidence="15" type="synonym">SPFH1</name>
</gene>
<evidence type="ECO:0000255" key="1"/>
<evidence type="ECO:0000256" key="2">
    <source>
        <dbReference type="SAM" id="MobiDB-lite"/>
    </source>
</evidence>
<evidence type="ECO:0000269" key="3">
    <source>
    </source>
</evidence>
<evidence type="ECO:0000269" key="4">
    <source>
    </source>
</evidence>
<evidence type="ECO:0000269" key="5">
    <source>
    </source>
</evidence>
<evidence type="ECO:0000269" key="6">
    <source>
    </source>
</evidence>
<evidence type="ECO:0000269" key="7">
    <source>
    </source>
</evidence>
<evidence type="ECO:0000269" key="8">
    <source>
    </source>
</evidence>
<evidence type="ECO:0000269" key="9">
    <source>
    </source>
</evidence>
<evidence type="ECO:0000269" key="10">
    <source>
    </source>
</evidence>
<evidence type="ECO:0000269" key="11">
    <source>
    </source>
</evidence>
<evidence type="ECO:0000269" key="12">
    <source>
    </source>
</evidence>
<evidence type="ECO:0000303" key="13">
    <source>
    </source>
</evidence>
<evidence type="ECO:0000303" key="14">
    <source>
    </source>
</evidence>
<evidence type="ECO:0000303" key="15">
    <source>
    </source>
</evidence>
<evidence type="ECO:0000305" key="16"/>
<evidence type="ECO:0000305" key="17">
    <source>
    </source>
</evidence>
<evidence type="ECO:0000312" key="18">
    <source>
        <dbReference type="HGNC" id="HGNC:16947"/>
    </source>
</evidence>
<evidence type="ECO:0007744" key="19">
    <source>
    </source>
</evidence>
<protein>
    <recommendedName>
        <fullName evidence="14">Erlin-1</fullName>
    </recommendedName>
    <alternativeName>
        <fullName>Endoplasmic reticulum lipid raft-associated protein 1</fullName>
    </alternativeName>
    <alternativeName>
        <fullName evidence="17">Protein KE04</fullName>
    </alternativeName>
    <alternativeName>
        <fullName>Stomatin-prohibitin-flotillin-HflC/K domain-containing protein 1</fullName>
        <shortName>SPFH domain-containing protein 1</shortName>
    </alternativeName>
</protein>
<sequence>MNMTQARVLVAAVVGLVAVLLYASIHKIEEGHLAVYYRGGALLTSPSGPGYHIMLPFITTFRSVQTTLQTDEVKNVPCGTSGGVMIYIDRIEVVNMLAPYAVFDIVRNYTADYDKTLIFNKIHHELNQFCSAHTLQEVYIELFDQIDENLKQALQKDLNLMAPGLTIQAVRVTKPKIPEAIRRNFELMEAEKTKLLIAAQKQKVVEKEAETERKKAVIEAEKIAQVAKIRFQQKVMEKETEKRISEIEDAAFLAREKAKADAEYYAAHKYATSNKHKLTPEYLELKKYQAIASNSKIYFGSNIPNMFVDSSCALKYSDIRTGRESSLPSKEALEPSGENVIQNKESTG</sequence>
<reference key="1">
    <citation type="journal article" date="2000" name="Biochem. Biophys. Res. Commun.">
        <title>Identification and characterization of a novel gene KE04 differentially expressed by activated human dendritic cells.</title>
        <authorList>
            <person name="Li N."/>
            <person name="Huang X."/>
            <person name="Zhao Z."/>
            <person name="Chen G."/>
            <person name="Zhang W."/>
            <person name="Cao X."/>
        </authorList>
    </citation>
    <scope>NUCLEOTIDE SEQUENCE [MRNA]</scope>
    <scope>SUBCELLULAR LOCATION</scope>
    <scope>TISSUE SPECIFICITY</scope>
    <source>
        <tissue>Dendritic cell</tissue>
    </source>
</reference>
<reference key="2">
    <citation type="submission" date="2005-04" db="EMBL/GenBank/DDBJ databases">
        <authorList>
            <person name="Suzuki Y."/>
            <person name="Sugano S."/>
            <person name="Totoki Y."/>
            <person name="Toyoda A."/>
            <person name="Takeda T."/>
            <person name="Sakaki Y."/>
            <person name="Tanaka A."/>
            <person name="Yokoyama S."/>
        </authorList>
    </citation>
    <scope>NUCLEOTIDE SEQUENCE [LARGE SCALE MRNA]</scope>
    <source>
        <tissue>Adipose tissue</tissue>
    </source>
</reference>
<reference key="3">
    <citation type="journal article" date="2004" name="Nature">
        <title>The DNA sequence and comparative analysis of human chromosome 10.</title>
        <authorList>
            <person name="Deloukas P."/>
            <person name="Earthrowl M.E."/>
            <person name="Grafham D.V."/>
            <person name="Rubenfield M."/>
            <person name="French L."/>
            <person name="Steward C.A."/>
            <person name="Sims S.K."/>
            <person name="Jones M.C."/>
            <person name="Searle S."/>
            <person name="Scott C."/>
            <person name="Howe K."/>
            <person name="Hunt S.E."/>
            <person name="Andrews T.D."/>
            <person name="Gilbert J.G.R."/>
            <person name="Swarbreck D."/>
            <person name="Ashurst J.L."/>
            <person name="Taylor A."/>
            <person name="Battles J."/>
            <person name="Bird C.P."/>
            <person name="Ainscough R."/>
            <person name="Almeida J.P."/>
            <person name="Ashwell R.I.S."/>
            <person name="Ambrose K.D."/>
            <person name="Babbage A.K."/>
            <person name="Bagguley C.L."/>
            <person name="Bailey J."/>
            <person name="Banerjee R."/>
            <person name="Bates K."/>
            <person name="Beasley H."/>
            <person name="Bray-Allen S."/>
            <person name="Brown A.J."/>
            <person name="Brown J.Y."/>
            <person name="Burford D.C."/>
            <person name="Burrill W."/>
            <person name="Burton J."/>
            <person name="Cahill P."/>
            <person name="Camire D."/>
            <person name="Carter N.P."/>
            <person name="Chapman J.C."/>
            <person name="Clark S.Y."/>
            <person name="Clarke G."/>
            <person name="Clee C.M."/>
            <person name="Clegg S."/>
            <person name="Corby N."/>
            <person name="Coulson A."/>
            <person name="Dhami P."/>
            <person name="Dutta I."/>
            <person name="Dunn M."/>
            <person name="Faulkner L."/>
            <person name="Frankish A."/>
            <person name="Frankland J.A."/>
            <person name="Garner P."/>
            <person name="Garnett J."/>
            <person name="Gribble S."/>
            <person name="Griffiths C."/>
            <person name="Grocock R."/>
            <person name="Gustafson E."/>
            <person name="Hammond S."/>
            <person name="Harley J.L."/>
            <person name="Hart E."/>
            <person name="Heath P.D."/>
            <person name="Ho T.P."/>
            <person name="Hopkins B."/>
            <person name="Horne J."/>
            <person name="Howden P.J."/>
            <person name="Huckle E."/>
            <person name="Hynds C."/>
            <person name="Johnson C."/>
            <person name="Johnson D."/>
            <person name="Kana A."/>
            <person name="Kay M."/>
            <person name="Kimberley A.M."/>
            <person name="Kershaw J.K."/>
            <person name="Kokkinaki M."/>
            <person name="Laird G.K."/>
            <person name="Lawlor S."/>
            <person name="Lee H.M."/>
            <person name="Leongamornlert D.A."/>
            <person name="Laird G."/>
            <person name="Lloyd C."/>
            <person name="Lloyd D.M."/>
            <person name="Loveland J."/>
            <person name="Lovell J."/>
            <person name="McLaren S."/>
            <person name="McLay K.E."/>
            <person name="McMurray A."/>
            <person name="Mashreghi-Mohammadi M."/>
            <person name="Matthews L."/>
            <person name="Milne S."/>
            <person name="Nickerson T."/>
            <person name="Nguyen M."/>
            <person name="Overton-Larty E."/>
            <person name="Palmer S.A."/>
            <person name="Pearce A.V."/>
            <person name="Peck A.I."/>
            <person name="Pelan S."/>
            <person name="Phillimore B."/>
            <person name="Porter K."/>
            <person name="Rice C.M."/>
            <person name="Rogosin A."/>
            <person name="Ross M.T."/>
            <person name="Sarafidou T."/>
            <person name="Sehra H.K."/>
            <person name="Shownkeen R."/>
            <person name="Skuce C.D."/>
            <person name="Smith M."/>
            <person name="Standring L."/>
            <person name="Sycamore N."/>
            <person name="Tester J."/>
            <person name="Thorpe A."/>
            <person name="Torcasso W."/>
            <person name="Tracey A."/>
            <person name="Tromans A."/>
            <person name="Tsolas J."/>
            <person name="Wall M."/>
            <person name="Walsh J."/>
            <person name="Wang H."/>
            <person name="Weinstock K."/>
            <person name="West A.P."/>
            <person name="Willey D.L."/>
            <person name="Whitehead S.L."/>
            <person name="Wilming L."/>
            <person name="Wray P.W."/>
            <person name="Young L."/>
            <person name="Chen Y."/>
            <person name="Lovering R.C."/>
            <person name="Moschonas N.K."/>
            <person name="Siebert R."/>
            <person name="Fechtel K."/>
            <person name="Bentley D."/>
            <person name="Durbin R.M."/>
            <person name="Hubbard T."/>
            <person name="Doucette-Stamm L."/>
            <person name="Beck S."/>
            <person name="Smith D.R."/>
            <person name="Rogers J."/>
        </authorList>
    </citation>
    <scope>NUCLEOTIDE SEQUENCE [LARGE SCALE GENOMIC DNA]</scope>
</reference>
<reference key="4">
    <citation type="submission" date="2005-09" db="EMBL/GenBank/DDBJ databases">
        <authorList>
            <person name="Mural R.J."/>
            <person name="Istrail S."/>
            <person name="Sutton G.G."/>
            <person name="Florea L."/>
            <person name="Halpern A.L."/>
            <person name="Mobarry C.M."/>
            <person name="Lippert R."/>
            <person name="Walenz B."/>
            <person name="Shatkay H."/>
            <person name="Dew I."/>
            <person name="Miller J.R."/>
            <person name="Flanigan M.J."/>
            <person name="Edwards N.J."/>
            <person name="Bolanos R."/>
            <person name="Fasulo D."/>
            <person name="Halldorsson B.V."/>
            <person name="Hannenhalli S."/>
            <person name="Turner R."/>
            <person name="Yooseph S."/>
            <person name="Lu F."/>
            <person name="Nusskern D.R."/>
            <person name="Shue B.C."/>
            <person name="Zheng X.H."/>
            <person name="Zhong F."/>
            <person name="Delcher A.L."/>
            <person name="Huson D.H."/>
            <person name="Kravitz S.A."/>
            <person name="Mouchard L."/>
            <person name="Reinert K."/>
            <person name="Remington K.A."/>
            <person name="Clark A.G."/>
            <person name="Waterman M.S."/>
            <person name="Eichler E.E."/>
            <person name="Adams M.D."/>
            <person name="Hunkapiller M.W."/>
            <person name="Myers E.W."/>
            <person name="Venter J.C."/>
        </authorList>
    </citation>
    <scope>NUCLEOTIDE SEQUENCE [LARGE SCALE GENOMIC DNA]</scope>
</reference>
<reference key="5">
    <citation type="journal article" date="2004" name="Genome Res.">
        <title>The status, quality, and expansion of the NIH full-length cDNA project: the Mammalian Gene Collection (MGC).</title>
        <authorList>
            <consortium name="The MGC Project Team"/>
        </authorList>
    </citation>
    <scope>NUCLEOTIDE SEQUENCE [LARGE SCALE MRNA]</scope>
    <source>
        <tissue>Brain</tissue>
    </source>
</reference>
<reference key="6">
    <citation type="journal article" date="2009" name="J. Biol. Chem.">
        <title>An endoplasmic reticulum (ER) membrane complex composed of SPFH1 and SPFH2 mediates the ER-associated degradation of inositol 1,4,5-trisphosphate receptors.</title>
        <authorList>
            <person name="Pearce M.M.P."/>
            <person name="Wormer D.B."/>
            <person name="Wilkens S."/>
            <person name="Wojcikiewicz R.J.H."/>
        </authorList>
    </citation>
    <scope>PROTEIN SEQUENCE</scope>
    <scope>FUNCTION</scope>
    <scope>SUBUNIT</scope>
    <scope>SUBCELLULAR LOCATION</scope>
    <scope>GLYCOSYLATION</scope>
    <scope>INTERACTION WITH ERLIN2</scope>
</reference>
<reference key="7">
    <citation type="journal article" date="2006" name="J. Cell Sci.">
        <title>Erlin-1 and erlin-2 are novel members of the prohibitin family of proteins that define lipid-raft-like domains of the ER.</title>
        <authorList>
            <person name="Browman D.T."/>
            <person name="Resek M.E."/>
            <person name="Zajchowski L.D."/>
            <person name="Robbins S.M."/>
        </authorList>
    </citation>
    <scope>SUBCELLULAR LOCATION</scope>
</reference>
<reference key="8">
    <citation type="journal article" date="2008" name="Proc. Natl. Acad. Sci. U.S.A.">
        <title>A quantitative atlas of mitotic phosphorylation.</title>
        <authorList>
            <person name="Dephoure N."/>
            <person name="Zhou C."/>
            <person name="Villen J."/>
            <person name="Beausoleil S.A."/>
            <person name="Bakalarski C.E."/>
            <person name="Elledge S.J."/>
            <person name="Gygi S.P."/>
        </authorList>
    </citation>
    <scope>IDENTIFICATION BY MASS SPECTROMETRY [LARGE SCALE ANALYSIS]</scope>
    <source>
        <tissue>Cervix carcinoma</tissue>
    </source>
</reference>
<reference key="9">
    <citation type="journal article" date="2009" name="J. Proteome Res.">
        <title>Glycoproteomics analysis of human liver tissue by combination of multiple enzyme digestion and hydrazide chemistry.</title>
        <authorList>
            <person name="Chen R."/>
            <person name="Jiang X."/>
            <person name="Sun D."/>
            <person name="Han G."/>
            <person name="Wang F."/>
            <person name="Ye M."/>
            <person name="Wang L."/>
            <person name="Zou H."/>
        </authorList>
    </citation>
    <scope>GLYCOSYLATION [LARGE SCALE ANALYSIS] AT ASN-108</scope>
    <source>
        <tissue>Liver</tissue>
    </source>
</reference>
<reference key="10">
    <citation type="journal article" date="2009" name="Science">
        <title>Lysine acetylation targets protein complexes and co-regulates major cellular functions.</title>
        <authorList>
            <person name="Choudhary C."/>
            <person name="Kumar C."/>
            <person name="Gnad F."/>
            <person name="Nielsen M.L."/>
            <person name="Rehman M."/>
            <person name="Walther T.C."/>
            <person name="Olsen J.V."/>
            <person name="Mann M."/>
        </authorList>
    </citation>
    <scope>ACETYLATION [LARGE SCALE ANALYSIS] AT LYS-269</scope>
    <scope>IDENTIFICATION BY MASS SPECTROMETRY [LARGE SCALE ANALYSIS]</scope>
</reference>
<reference key="11">
    <citation type="journal article" date="2011" name="BMC Syst. Biol.">
        <title>Initial characterization of the human central proteome.</title>
        <authorList>
            <person name="Burkard T.R."/>
            <person name="Planyavsky M."/>
            <person name="Kaupe I."/>
            <person name="Breitwieser F.P."/>
            <person name="Buerckstuemmer T."/>
            <person name="Bennett K.L."/>
            <person name="Superti-Furga G."/>
            <person name="Colinge J."/>
        </authorList>
    </citation>
    <scope>IDENTIFICATION BY MASS SPECTROMETRY [LARGE SCALE ANALYSIS]</scope>
</reference>
<reference key="12">
    <citation type="journal article" date="2011" name="J. Biol. Chem.">
        <title>Membrane-associated ubiquitin ligase complex containing gp78 mediates sterol-accelerated degradation of 3-hydroxy-3-methylglutaryl-coenzyme A reductase.</title>
        <authorList>
            <person name="Jo Y."/>
            <person name="Sguigna P.V."/>
            <person name="DeBose-Boyd R.A."/>
        </authorList>
    </citation>
    <scope>INTERACTION WITH AMFR AND SYVN1</scope>
</reference>
<reference key="13">
    <citation type="journal article" date="2011" name="J. Biol. Chem.">
        <title>RNF170 protein, an endoplasmic reticulum membrane ubiquitin ligase, mediates inositol 1,4,5-trisphosphate receptor ubiquitination and degradation.</title>
        <authorList>
            <person name="Lu J.P."/>
            <person name="Wang Y."/>
            <person name="Sliter D.A."/>
            <person name="Pearce M.M."/>
            <person name="Wojcikiewicz R.J."/>
        </authorList>
    </citation>
    <scope>INTERACTION WITH RNF170</scope>
</reference>
<reference key="14">
    <citation type="journal article" date="2013" name="J. Cell Biol.">
        <title>Erlins restrict SREBP activation in the ER and regulate cellular cholesterol homeostasis.</title>
        <authorList>
            <person name="Huber M.D."/>
            <person name="Vesely P.W."/>
            <person name="Datta K."/>
            <person name="Gerace L."/>
        </authorList>
    </citation>
    <scope>FUNCTION</scope>
</reference>
<reference key="15">
    <citation type="journal article" date="2014" name="J. Proteomics">
        <title>An enzyme assisted RP-RPLC approach for in-depth analysis of human liver phosphoproteome.</title>
        <authorList>
            <person name="Bian Y."/>
            <person name="Song C."/>
            <person name="Cheng K."/>
            <person name="Dong M."/>
            <person name="Wang F."/>
            <person name="Huang J."/>
            <person name="Sun D."/>
            <person name="Wang L."/>
            <person name="Ye M."/>
            <person name="Zou H."/>
        </authorList>
    </citation>
    <scope>IDENTIFICATION BY MASS SPECTROMETRY [LARGE SCALE ANALYSIS]</scope>
    <source>
        <tissue>Liver</tissue>
    </source>
</reference>
<reference key="16">
    <citation type="journal article" date="2014" name="Science">
        <title>Exome sequencing links corticospinal motor neuron disease to common neurodegenerative disorders.</title>
        <authorList>
            <person name="Novarino G."/>
            <person name="Fenstermaker A.G."/>
            <person name="Zaki M.S."/>
            <person name="Hofree M."/>
            <person name="Silhavy J.L."/>
            <person name="Heiberg A.D."/>
            <person name="Abdellateef M."/>
            <person name="Rosti B."/>
            <person name="Scott E."/>
            <person name="Mansour L."/>
            <person name="Masri A."/>
            <person name="Kayserili H."/>
            <person name="Al-Aama J.Y."/>
            <person name="Abdel-Salam G.M."/>
            <person name="Karminejad A."/>
            <person name="Kara M."/>
            <person name="Kara B."/>
            <person name="Bozorgmehri B."/>
            <person name="Ben-Omran T."/>
            <person name="Mojahedi F."/>
            <person name="Mahmoud I.G."/>
            <person name="Bouslam N."/>
            <person name="Bouhouche A."/>
            <person name="Benomar A."/>
            <person name="Hanein S."/>
            <person name="Raymond L."/>
            <person name="Forlani S."/>
            <person name="Mascaro M."/>
            <person name="Selim L."/>
            <person name="Shehata N."/>
            <person name="Al-Allawi N."/>
            <person name="Bindu P.S."/>
            <person name="Azam M."/>
            <person name="Gunel M."/>
            <person name="Caglayan A."/>
            <person name="Bilguvar K."/>
            <person name="Tolun A."/>
            <person name="Issa M.Y."/>
            <person name="Schroth J."/>
            <person name="Spencer E.G."/>
            <person name="Rosti R.O."/>
            <person name="Akizu N."/>
            <person name="Vaux K.K."/>
            <person name="Johansen A."/>
            <person name="Koh A.A."/>
            <person name="Megahed H."/>
            <person name="Durr A."/>
            <person name="Brice A."/>
            <person name="Stevanin G."/>
            <person name="Gabriel S.B."/>
            <person name="Ideker T."/>
            <person name="Gleeson J.G."/>
        </authorList>
    </citation>
    <scope>INVOLVEMENT IN SPG62</scope>
    <scope>VARIANT SPG62 VAL-50</scope>
</reference>
<reference key="17">
    <citation type="journal article" date="2015" name="Proteomics">
        <title>N-terminome analysis of the human mitochondrial proteome.</title>
        <authorList>
            <person name="Vaca Jacome A.S."/>
            <person name="Rabilloud T."/>
            <person name="Schaeffer-Reiss C."/>
            <person name="Rompais M."/>
            <person name="Ayoub D."/>
            <person name="Lane L."/>
            <person name="Bairoch A."/>
            <person name="Van Dorsselaer A."/>
            <person name="Carapito C."/>
        </authorList>
    </citation>
    <scope>IDENTIFICATION BY MASS SPECTROMETRY [LARGE SCALE ANALYSIS]</scope>
</reference>
<reference key="18">
    <citation type="journal article" date="2019" name="Cells">
        <title>The Host Factor Erlin-1 is Required for Efficient Hepatitis C Virus Infection.</title>
        <authorList>
            <person name="Whitten-Bauer C."/>
            <person name="Chung J."/>
            <person name="Gomez-Moreno A."/>
            <person name="Gomollon-Zueco P."/>
            <person name="Huber M.D."/>
            <person name="Gerace L."/>
            <person name="Garaigorta U."/>
        </authorList>
    </citation>
    <scope>FUNCTION (MICROBIAL INFECTION)</scope>
</reference>
<reference key="19">
    <citation type="journal article" date="2023" name="Dev. Cell">
        <title>Usp25-Erlin1/2 activity limits cholesterol flux to restrict virus infection.</title>
        <authorList>
            <person name="Teo Q.W."/>
            <person name="Wong H.H."/>
            <person name="Heunis T."/>
            <person name="Stancheva V."/>
            <person name="Hachim A."/>
            <person name="Lv H."/>
            <person name="Siu L."/>
            <person name="Ho J."/>
            <person name="Lan Y."/>
            <person name="Mok C.K.P."/>
            <person name="Ulferts R."/>
            <person name="Sanyal S."/>
        </authorList>
    </citation>
    <scope>FUNCTION</scope>
    <scope>DEUBIQUITINATION BY USP25</scope>
</reference>
<name>ERLN1_HUMAN</name>
<comment type="function">
    <text evidence="6 9 12">Component of the ERLIN1/ERLIN2 complex which mediates the endoplasmic reticulum-associated degradation (ERAD) of inositol 1,4,5-trisphosphate receptors (IP3Rs). Involved in regulation of cellular cholesterol homeostasis by regulation the SREBP signaling pathway (PubMed:37683630). Binds cholesterol and may promote ER retention of the SCAP-SREBF complex (PubMed:24217618).</text>
</comment>
<comment type="function">
    <text evidence="11">(Microbial infection) Required early in hepatitis C virus (HCV) infection to initiate RNA replication, and later in the infection to support infectious virus production.</text>
</comment>
<comment type="subunit">
    <text evidence="6 7 8">Forms a heteromeric complex with ERLIN2 (PubMed:19240031). In complex with ERLIN2, interacts with RNF170 (PubMed:21610068). Interacts with AMFR and SYVN1 (PubMed:21343306).</text>
</comment>
<comment type="interaction">
    <interactant intactId="EBI-359299">
        <id>O75477</id>
    </interactant>
    <interactant intactId="EBI-3925742">
        <id>Q8TD06</id>
        <label>AGR3</label>
    </interactant>
    <organismsDiffer>false</organismsDiffer>
    <experiments>6</experiments>
</comment>
<comment type="interaction">
    <interactant intactId="EBI-359299">
        <id>O75477</id>
    </interactant>
    <interactant intactId="EBI-1046367">
        <id>Q9UKV5</id>
        <label>AMFR</label>
    </interactant>
    <organismsDiffer>false</organismsDiffer>
    <experiments>2</experiments>
</comment>
<comment type="interaction">
    <interactant intactId="EBI-359299">
        <id>O75477</id>
    </interactant>
    <interactant intactId="EBI-752094">
        <id>Q12982</id>
        <label>BNIP2</label>
    </interactant>
    <organismsDiffer>false</organismsDiffer>
    <experiments>3</experiments>
</comment>
<comment type="interaction">
    <interactant intactId="EBI-359299">
        <id>O75477</id>
    </interactant>
    <interactant intactId="EBI-11050313">
        <id>Q7Z4R8</id>
        <label>C6orf120</label>
    </interactant>
    <organismsDiffer>false</organismsDiffer>
    <experiments>4</experiments>
</comment>
<comment type="interaction">
    <interactant intactId="EBI-359299">
        <id>O75477</id>
    </interactant>
    <interactant intactId="EBI-4400770">
        <id>O94905</id>
        <label>ERLIN2</label>
    </interactant>
    <organismsDiffer>false</organismsDiffer>
    <experiments>5</experiments>
</comment>
<comment type="interaction">
    <interactant intactId="EBI-359299">
        <id>O75477</id>
    </interactant>
    <interactant intactId="EBI-11337888">
        <id>Q7L5A8</id>
        <label>FA2H</label>
    </interactant>
    <organismsDiffer>false</organismsDiffer>
    <experiments>3</experiments>
</comment>
<comment type="interaction">
    <interactant intactId="EBI-359299">
        <id>O75477</id>
    </interactant>
    <interactant intactId="EBI-3232108">
        <id>Q8N0V3</id>
        <label>RBFA</label>
    </interactant>
    <organismsDiffer>false</organismsDiffer>
    <experiments>3</experiments>
</comment>
<comment type="interaction">
    <interactant intactId="EBI-359299">
        <id>O75477</id>
    </interactant>
    <interactant intactId="EBI-8652744">
        <id>Q96IW7</id>
        <label>SEC22A</label>
    </interactant>
    <organismsDiffer>false</organismsDiffer>
    <experiments>6</experiments>
</comment>
<comment type="interaction">
    <interactant intactId="EBI-359299">
        <id>O75477</id>
    </interactant>
    <interactant intactId="EBI-81088">
        <id>Q15436</id>
        <label>SEC23A</label>
    </interactant>
    <organismsDiffer>false</organismsDiffer>
    <experiments>3</experiments>
</comment>
<comment type="interaction">
    <interactant intactId="EBI-359299">
        <id>O75477</id>
    </interactant>
    <interactant intactId="EBI-947849">
        <id>Q86TM6</id>
        <label>SYVN1</label>
    </interactant>
    <organismsDiffer>false</organismsDiffer>
    <experiments>2</experiments>
</comment>
<comment type="interaction">
    <interactant intactId="EBI-359299">
        <id>O75477</id>
    </interactant>
    <interactant intactId="EBI-10265825">
        <id>Q8N511</id>
        <label>TMEM199</label>
    </interactant>
    <organismsDiffer>false</organismsDiffer>
    <experiments>3</experiments>
</comment>
<comment type="interaction">
    <interactant intactId="EBI-359299">
        <id>O75477</id>
    </interactant>
    <interactant intactId="EBI-10175845">
        <id>B2RDE6</id>
    </interactant>
    <organismsDiffer>false</organismsDiffer>
    <experiments>3</experiments>
</comment>
<comment type="subcellular location">
    <subcellularLocation>
        <location evidence="3 4 6">Endoplasmic reticulum membrane</location>
        <topology evidence="3 4 6">Single-pass type II membrane protein</topology>
    </subcellularLocation>
    <text>Associated with lipid raft-like domains of the endoplasmic reticulum membrane.</text>
</comment>
<comment type="tissue specificity">
    <text evidence="3">Expressed in heart, placenta, liver, kidney, pancreas, prostate, testis, ovary and small intestine.</text>
</comment>
<comment type="PTM">
    <text evidence="12">Deubiquitinated by USP25; leading to stabilization.</text>
</comment>
<comment type="disease" evidence="10">
    <disease id="DI-04732">
        <name>Spastic paraplegia 62, autosomal recessive</name>
        <acronym>SPG62</acronym>
        <description>A form of spastic paraplegia, a neurodegenerative disorder characterized by a slow, gradual, progressive weakness and spasticity of the lower limbs. Rate of progression and the severity of symptoms are quite variable. Initial symptoms may include difficulty with balance, weakness and stiffness in the legs, muscle spasms, and dragging the toes when walking. In some forms of the disorder, bladder symptoms (such as incontinence) may appear, or the weakness and stiffness may spread to other parts of the body.</description>
        <dbReference type="MIM" id="615681"/>
    </disease>
    <text>The disease is caused by variants affecting the gene represented in this entry.</text>
</comment>
<comment type="similarity">
    <text evidence="16">Belongs to the band 7/mec-2 family.</text>
</comment>
<comment type="sequence caution" evidence="16">
    <conflict type="erroneous initiation">
        <sequence resource="EMBL-CDS" id="AAC26658"/>
    </conflict>
    <text>Truncated N-terminus.</text>
</comment>
<comment type="sequence caution" evidence="16">
    <conflict type="erroneous initiation">
        <sequence resource="EMBL-CDS" id="AAH31791"/>
    </conflict>
    <text>Truncated N-terminus.</text>
</comment>
<comment type="sequence caution" evidence="16">
    <conflict type="erroneous initiation">
        <sequence resource="EMBL-CDS" id="BAD96200"/>
    </conflict>
    <text>Truncated N-terminus.</text>
</comment>
<organism>
    <name type="scientific">Homo sapiens</name>
    <name type="common">Human</name>
    <dbReference type="NCBI Taxonomy" id="9606"/>
    <lineage>
        <taxon>Eukaryota</taxon>
        <taxon>Metazoa</taxon>
        <taxon>Chordata</taxon>
        <taxon>Craniata</taxon>
        <taxon>Vertebrata</taxon>
        <taxon>Euteleostomi</taxon>
        <taxon>Mammalia</taxon>
        <taxon>Eutheria</taxon>
        <taxon>Euarchontoglires</taxon>
        <taxon>Primates</taxon>
        <taxon>Haplorrhini</taxon>
        <taxon>Catarrhini</taxon>
        <taxon>Hominidae</taxon>
        <taxon>Homo</taxon>
    </lineage>
</organism>
<accession>O75477</accession>
<accession>B0QZ42</accession>
<accession>D3DR65</accession>
<accession>Q53HV0</accession>